<feature type="chain" id="PRO_0000299640" description="Putative uncharacterized protein YLR349W">
    <location>
        <begin position="1"/>
        <end position="168"/>
    </location>
</feature>
<evidence type="ECO:0000305" key="1"/>
<evidence type="ECO:0000305" key="2">
    <source>
    </source>
</evidence>
<organism>
    <name type="scientific">Saccharomyces cerevisiae (strain ATCC 204508 / S288c)</name>
    <name type="common">Baker's yeast</name>
    <dbReference type="NCBI Taxonomy" id="559292"/>
    <lineage>
        <taxon>Eukaryota</taxon>
        <taxon>Fungi</taxon>
        <taxon>Dikarya</taxon>
        <taxon>Ascomycota</taxon>
        <taxon>Saccharomycotina</taxon>
        <taxon>Saccharomycetes</taxon>
        <taxon>Saccharomycetales</taxon>
        <taxon>Saccharomycetaceae</taxon>
        <taxon>Saccharomyces</taxon>
    </lineage>
</organism>
<reference key="1">
    <citation type="journal article" date="1997" name="Nature">
        <title>The nucleotide sequence of Saccharomyces cerevisiae chromosome XII.</title>
        <authorList>
            <person name="Johnston M."/>
            <person name="Hillier L.W."/>
            <person name="Riles L."/>
            <person name="Albermann K."/>
            <person name="Andre B."/>
            <person name="Ansorge W."/>
            <person name="Benes V."/>
            <person name="Brueckner M."/>
            <person name="Delius H."/>
            <person name="Dubois E."/>
            <person name="Duesterhoeft A."/>
            <person name="Entian K.-D."/>
            <person name="Floeth M."/>
            <person name="Goffeau A."/>
            <person name="Hebling U."/>
            <person name="Heumann K."/>
            <person name="Heuss-Neitzel D."/>
            <person name="Hilbert H."/>
            <person name="Hilger F."/>
            <person name="Kleine K."/>
            <person name="Koetter P."/>
            <person name="Louis E.J."/>
            <person name="Messenguy F."/>
            <person name="Mewes H.-W."/>
            <person name="Miosga T."/>
            <person name="Moestl D."/>
            <person name="Mueller-Auer S."/>
            <person name="Nentwich U."/>
            <person name="Obermaier B."/>
            <person name="Piravandi E."/>
            <person name="Pohl T.M."/>
            <person name="Portetelle D."/>
            <person name="Purnelle B."/>
            <person name="Rechmann S."/>
            <person name="Rieger M."/>
            <person name="Rinke M."/>
            <person name="Rose M."/>
            <person name="Scharfe M."/>
            <person name="Scherens B."/>
            <person name="Scholler P."/>
            <person name="Schwager C."/>
            <person name="Schwarz S."/>
            <person name="Underwood A.P."/>
            <person name="Urrestarazu L.A."/>
            <person name="Vandenbol M."/>
            <person name="Verhasselt P."/>
            <person name="Vierendeels F."/>
            <person name="Voet M."/>
            <person name="Volckaert G."/>
            <person name="Voss H."/>
            <person name="Wambutt R."/>
            <person name="Wedler E."/>
            <person name="Wedler H."/>
            <person name="Zimmermann F.K."/>
            <person name="Zollner A."/>
            <person name="Hani J."/>
            <person name="Hoheisel J.D."/>
        </authorList>
    </citation>
    <scope>NUCLEOTIDE SEQUENCE [LARGE SCALE GENOMIC DNA]</scope>
    <source>
        <strain>ATCC 204508 / S288c</strain>
    </source>
</reference>
<reference key="2">
    <citation type="journal article" date="2014" name="G3 (Bethesda)">
        <title>The reference genome sequence of Saccharomyces cerevisiae: Then and now.</title>
        <authorList>
            <person name="Engel S.R."/>
            <person name="Dietrich F.S."/>
            <person name="Fisk D.G."/>
            <person name="Binkley G."/>
            <person name="Balakrishnan R."/>
            <person name="Costanzo M.C."/>
            <person name="Dwight S.S."/>
            <person name="Hitz B.C."/>
            <person name="Karra K."/>
            <person name="Nash R.S."/>
            <person name="Weng S."/>
            <person name="Wong E.D."/>
            <person name="Lloyd P."/>
            <person name="Skrzypek M.S."/>
            <person name="Miyasato S.R."/>
            <person name="Simison M."/>
            <person name="Cherry J.M."/>
        </authorList>
    </citation>
    <scope>GENOME REANNOTATION</scope>
    <source>
        <strain>ATCC 204508 / S288c</strain>
    </source>
</reference>
<protein>
    <recommendedName>
        <fullName>Putative uncharacterized protein YLR349W</fullName>
    </recommendedName>
</protein>
<comment type="miscellaneous">
    <text evidence="1">Partially overlaps DIC1.</text>
</comment>
<comment type="caution">
    <text evidence="2">Product of a dubious gene prediction unlikely to encode a functional protein. Because of that it is not part of the S.cerevisiae S288c complete/reference proteome set.</text>
</comment>
<proteinExistence type="uncertain"/>
<dbReference type="EMBL" id="U19028">
    <property type="protein sequence ID" value="AAB67269.1"/>
    <property type="molecule type" value="Genomic_DNA"/>
</dbReference>
<dbReference type="PIR" id="S69314">
    <property type="entry name" value="S69314"/>
</dbReference>
<dbReference type="DIP" id="DIP-5436N"/>
<dbReference type="PaxDb" id="4932-YLR349W"/>
<dbReference type="EnsemblFungi" id="YLR349W_mRNA">
    <property type="protein sequence ID" value="YLR349W"/>
    <property type="gene ID" value="YLR349W"/>
</dbReference>
<dbReference type="AGR" id="SGD:S000004341"/>
<dbReference type="SGD" id="S000004341">
    <property type="gene designation" value="YLR349W"/>
</dbReference>
<dbReference type="HOGENOM" id="CLU_1696884_0_0_1"/>
<dbReference type="OMA" id="STHKYAY"/>
<name>YL349_YEAST</name>
<sequence>MAPLNMEQGKRYAMLVNCSRGITFSFNKSYAPNLTVVYVHCLNTAALRPEYNPTTPSFAKILSNILKSVGLGIGAACSLTLAKSRGCVTMVAKIPAAPPYHHGYLIFLPADSFALVDMPSSCCVIFSTLSEQEKRTSTHKYAYDYVYPYIYIHYKPTARPFPAPNIAA</sequence>
<gene>
    <name type="ordered locus">YLR349W</name>
</gene>
<accession>O94086</accession>